<feature type="chain" id="PRO_0000345549" description="Small ribosomal subunit protein bS18">
    <location>
        <begin position="1"/>
        <end position="74"/>
    </location>
</feature>
<dbReference type="EMBL" id="CP000356">
    <property type="protein sequence ID" value="ABF53613.1"/>
    <property type="molecule type" value="Genomic_DNA"/>
</dbReference>
<dbReference type="RefSeq" id="WP_003040094.1">
    <property type="nucleotide sequence ID" value="NC_008048.1"/>
</dbReference>
<dbReference type="SMR" id="Q1GRV9"/>
<dbReference type="STRING" id="317655.Sala_1901"/>
<dbReference type="KEGG" id="sal:Sala_1901"/>
<dbReference type="eggNOG" id="COG0238">
    <property type="taxonomic scope" value="Bacteria"/>
</dbReference>
<dbReference type="HOGENOM" id="CLU_148710_2_3_5"/>
<dbReference type="OrthoDB" id="9812008at2"/>
<dbReference type="Proteomes" id="UP000006578">
    <property type="component" value="Chromosome"/>
</dbReference>
<dbReference type="GO" id="GO:0022627">
    <property type="term" value="C:cytosolic small ribosomal subunit"/>
    <property type="evidence" value="ECO:0007669"/>
    <property type="project" value="TreeGrafter"/>
</dbReference>
<dbReference type="GO" id="GO:0070181">
    <property type="term" value="F:small ribosomal subunit rRNA binding"/>
    <property type="evidence" value="ECO:0007669"/>
    <property type="project" value="TreeGrafter"/>
</dbReference>
<dbReference type="GO" id="GO:0003735">
    <property type="term" value="F:structural constituent of ribosome"/>
    <property type="evidence" value="ECO:0007669"/>
    <property type="project" value="InterPro"/>
</dbReference>
<dbReference type="GO" id="GO:0006412">
    <property type="term" value="P:translation"/>
    <property type="evidence" value="ECO:0007669"/>
    <property type="project" value="UniProtKB-UniRule"/>
</dbReference>
<dbReference type="Gene3D" id="4.10.640.10">
    <property type="entry name" value="Ribosomal protein S18"/>
    <property type="match status" value="1"/>
</dbReference>
<dbReference type="HAMAP" id="MF_00270">
    <property type="entry name" value="Ribosomal_bS18"/>
    <property type="match status" value="1"/>
</dbReference>
<dbReference type="InterPro" id="IPR001648">
    <property type="entry name" value="Ribosomal_bS18"/>
</dbReference>
<dbReference type="InterPro" id="IPR018275">
    <property type="entry name" value="Ribosomal_bS18_CS"/>
</dbReference>
<dbReference type="InterPro" id="IPR036870">
    <property type="entry name" value="Ribosomal_bS18_sf"/>
</dbReference>
<dbReference type="NCBIfam" id="TIGR00165">
    <property type="entry name" value="S18"/>
    <property type="match status" value="1"/>
</dbReference>
<dbReference type="PANTHER" id="PTHR13479">
    <property type="entry name" value="30S RIBOSOMAL PROTEIN S18"/>
    <property type="match status" value="1"/>
</dbReference>
<dbReference type="PANTHER" id="PTHR13479:SF40">
    <property type="entry name" value="SMALL RIBOSOMAL SUBUNIT PROTEIN BS18M"/>
    <property type="match status" value="1"/>
</dbReference>
<dbReference type="Pfam" id="PF01084">
    <property type="entry name" value="Ribosomal_S18"/>
    <property type="match status" value="1"/>
</dbReference>
<dbReference type="PRINTS" id="PR00974">
    <property type="entry name" value="RIBOSOMALS18"/>
</dbReference>
<dbReference type="SUPFAM" id="SSF46911">
    <property type="entry name" value="Ribosomal protein S18"/>
    <property type="match status" value="1"/>
</dbReference>
<dbReference type="PROSITE" id="PS00057">
    <property type="entry name" value="RIBOSOMAL_S18"/>
    <property type="match status" value="1"/>
</dbReference>
<accession>Q1GRV9</accession>
<evidence type="ECO:0000255" key="1">
    <source>
        <dbReference type="HAMAP-Rule" id="MF_00270"/>
    </source>
</evidence>
<evidence type="ECO:0000305" key="2"/>
<keyword id="KW-1185">Reference proteome</keyword>
<keyword id="KW-0687">Ribonucleoprotein</keyword>
<keyword id="KW-0689">Ribosomal protein</keyword>
<keyword id="KW-0694">RNA-binding</keyword>
<keyword id="KW-0699">rRNA-binding</keyword>
<protein>
    <recommendedName>
        <fullName evidence="1">Small ribosomal subunit protein bS18</fullName>
    </recommendedName>
    <alternativeName>
        <fullName evidence="2">30S ribosomal protein S18</fullName>
    </alternativeName>
</protein>
<sequence>MARPFFRRRKTCPFSAKDAPVIDYKDVRLLQGYLSERGKIVPSRITAVSTKKQRELAKAIKRARHIGLLPYIVK</sequence>
<name>RS18_SPHAL</name>
<comment type="function">
    <text evidence="1">Binds as a heterodimer with protein bS6 to the central domain of the 16S rRNA, where it helps stabilize the platform of the 30S subunit.</text>
</comment>
<comment type="subunit">
    <text evidence="1">Part of the 30S ribosomal subunit. Forms a tight heterodimer with protein bS6.</text>
</comment>
<comment type="similarity">
    <text evidence="1">Belongs to the bacterial ribosomal protein bS18 family.</text>
</comment>
<reference key="1">
    <citation type="journal article" date="2009" name="Proc. Natl. Acad. Sci. U.S.A.">
        <title>The genomic basis of trophic strategy in marine bacteria.</title>
        <authorList>
            <person name="Lauro F.M."/>
            <person name="McDougald D."/>
            <person name="Thomas T."/>
            <person name="Williams T.J."/>
            <person name="Egan S."/>
            <person name="Rice S."/>
            <person name="DeMaere M.Z."/>
            <person name="Ting L."/>
            <person name="Ertan H."/>
            <person name="Johnson J."/>
            <person name="Ferriera S."/>
            <person name="Lapidus A."/>
            <person name="Anderson I."/>
            <person name="Kyrpides N."/>
            <person name="Munk A.C."/>
            <person name="Detter C."/>
            <person name="Han C.S."/>
            <person name="Brown M.V."/>
            <person name="Robb F.T."/>
            <person name="Kjelleberg S."/>
            <person name="Cavicchioli R."/>
        </authorList>
    </citation>
    <scope>NUCLEOTIDE SEQUENCE [LARGE SCALE GENOMIC DNA]</scope>
    <source>
        <strain>DSM 13593 / LMG 18877 / RB2256</strain>
    </source>
</reference>
<organism>
    <name type="scientific">Sphingopyxis alaskensis (strain DSM 13593 / LMG 18877 / RB2256)</name>
    <name type="common">Sphingomonas alaskensis</name>
    <dbReference type="NCBI Taxonomy" id="317655"/>
    <lineage>
        <taxon>Bacteria</taxon>
        <taxon>Pseudomonadati</taxon>
        <taxon>Pseudomonadota</taxon>
        <taxon>Alphaproteobacteria</taxon>
        <taxon>Sphingomonadales</taxon>
        <taxon>Sphingomonadaceae</taxon>
        <taxon>Sphingopyxis</taxon>
    </lineage>
</organism>
<gene>
    <name evidence="1" type="primary">rpsR</name>
    <name type="ordered locus">Sala_1901</name>
</gene>
<proteinExistence type="inferred from homology"/>